<accession>A4VSG9</accession>
<sequence>MNIVISKPDKNKIRQKRHRRVRGKISGTAARPRLNIFRSNTGIYAQVIDDVAGVTLASASTLDKEVSKGTKTEQAVVVGKLVAERAVAKGISEVVFDRGGYLYHGRVKALAESARENGLKF</sequence>
<proteinExistence type="inferred from homology"/>
<keyword id="KW-0687">Ribonucleoprotein</keyword>
<keyword id="KW-0689">Ribosomal protein</keyword>
<keyword id="KW-0694">RNA-binding</keyword>
<keyword id="KW-0699">rRNA-binding</keyword>
<evidence type="ECO:0000255" key="1">
    <source>
        <dbReference type="HAMAP-Rule" id="MF_01337"/>
    </source>
</evidence>
<evidence type="ECO:0000305" key="2"/>
<comment type="function">
    <text evidence="1">This is one of the proteins that bind and probably mediate the attachment of the 5S RNA into the large ribosomal subunit, where it forms part of the central protuberance.</text>
</comment>
<comment type="subunit">
    <text evidence="1">Part of the 50S ribosomal subunit; part of the 5S rRNA/L5/L18/L25 subcomplex. Contacts the 5S and 23S rRNAs.</text>
</comment>
<comment type="similarity">
    <text evidence="1">Belongs to the universal ribosomal protein uL18 family.</text>
</comment>
<feature type="chain" id="PRO_1000053124" description="Large ribosomal subunit protein uL18">
    <location>
        <begin position="1"/>
        <end position="121"/>
    </location>
</feature>
<name>RL18_STRSY</name>
<organism>
    <name type="scientific">Streptococcus suis (strain 05ZYH33)</name>
    <dbReference type="NCBI Taxonomy" id="391295"/>
    <lineage>
        <taxon>Bacteria</taxon>
        <taxon>Bacillati</taxon>
        <taxon>Bacillota</taxon>
        <taxon>Bacilli</taxon>
        <taxon>Lactobacillales</taxon>
        <taxon>Streptococcaceae</taxon>
        <taxon>Streptococcus</taxon>
    </lineage>
</organism>
<gene>
    <name evidence="1" type="primary">rplR</name>
    <name type="ordered locus">SSU05_0086</name>
</gene>
<reference key="1">
    <citation type="journal article" date="2007" name="PLoS ONE">
        <title>A glimpse of streptococcal toxic shock syndrome from comparative genomics of S. suis 2 Chinese isolates.</title>
        <authorList>
            <person name="Chen C."/>
            <person name="Tang J."/>
            <person name="Dong W."/>
            <person name="Wang C."/>
            <person name="Feng Y."/>
            <person name="Wang J."/>
            <person name="Zheng F."/>
            <person name="Pan X."/>
            <person name="Liu D."/>
            <person name="Li M."/>
            <person name="Song Y."/>
            <person name="Zhu X."/>
            <person name="Sun H."/>
            <person name="Feng T."/>
            <person name="Guo Z."/>
            <person name="Ju A."/>
            <person name="Ge J."/>
            <person name="Dong Y."/>
            <person name="Sun W."/>
            <person name="Jiang Y."/>
            <person name="Wang J."/>
            <person name="Yan J."/>
            <person name="Yang H."/>
            <person name="Wang X."/>
            <person name="Gao G.F."/>
            <person name="Yang R."/>
            <person name="Wang J."/>
            <person name="Yu J."/>
        </authorList>
    </citation>
    <scope>NUCLEOTIDE SEQUENCE [LARGE SCALE GENOMIC DNA]</scope>
    <source>
        <strain>05ZYH33</strain>
    </source>
</reference>
<dbReference type="EMBL" id="CP000407">
    <property type="protein sequence ID" value="ABP89058.1"/>
    <property type="molecule type" value="Genomic_DNA"/>
</dbReference>
<dbReference type="SMR" id="A4VSG9"/>
<dbReference type="STRING" id="391295.SSU05_0086"/>
<dbReference type="KEGG" id="ssu:SSU05_0086"/>
<dbReference type="eggNOG" id="COG0256">
    <property type="taxonomic scope" value="Bacteria"/>
</dbReference>
<dbReference type="HOGENOM" id="CLU_098841_0_1_9"/>
<dbReference type="GO" id="GO:0022625">
    <property type="term" value="C:cytosolic large ribosomal subunit"/>
    <property type="evidence" value="ECO:0007669"/>
    <property type="project" value="TreeGrafter"/>
</dbReference>
<dbReference type="GO" id="GO:0008097">
    <property type="term" value="F:5S rRNA binding"/>
    <property type="evidence" value="ECO:0007669"/>
    <property type="project" value="TreeGrafter"/>
</dbReference>
<dbReference type="GO" id="GO:0003735">
    <property type="term" value="F:structural constituent of ribosome"/>
    <property type="evidence" value="ECO:0007669"/>
    <property type="project" value="InterPro"/>
</dbReference>
<dbReference type="GO" id="GO:0006412">
    <property type="term" value="P:translation"/>
    <property type="evidence" value="ECO:0007669"/>
    <property type="project" value="UniProtKB-UniRule"/>
</dbReference>
<dbReference type="CDD" id="cd00432">
    <property type="entry name" value="Ribosomal_L18_L5e"/>
    <property type="match status" value="1"/>
</dbReference>
<dbReference type="FunFam" id="3.30.420.100:FF:000001">
    <property type="entry name" value="50S ribosomal protein L18"/>
    <property type="match status" value="1"/>
</dbReference>
<dbReference type="Gene3D" id="3.30.420.100">
    <property type="match status" value="1"/>
</dbReference>
<dbReference type="HAMAP" id="MF_01337_B">
    <property type="entry name" value="Ribosomal_uL18_B"/>
    <property type="match status" value="1"/>
</dbReference>
<dbReference type="InterPro" id="IPR004389">
    <property type="entry name" value="Ribosomal_uL18_bac-type"/>
</dbReference>
<dbReference type="InterPro" id="IPR005484">
    <property type="entry name" value="Ribosomal_uL18_bac/euk"/>
</dbReference>
<dbReference type="NCBIfam" id="TIGR00060">
    <property type="entry name" value="L18_bact"/>
    <property type="match status" value="1"/>
</dbReference>
<dbReference type="PANTHER" id="PTHR12899">
    <property type="entry name" value="39S RIBOSOMAL PROTEIN L18, MITOCHONDRIAL"/>
    <property type="match status" value="1"/>
</dbReference>
<dbReference type="PANTHER" id="PTHR12899:SF3">
    <property type="entry name" value="LARGE RIBOSOMAL SUBUNIT PROTEIN UL18M"/>
    <property type="match status" value="1"/>
</dbReference>
<dbReference type="Pfam" id="PF00861">
    <property type="entry name" value="Ribosomal_L18p"/>
    <property type="match status" value="1"/>
</dbReference>
<dbReference type="SUPFAM" id="SSF53137">
    <property type="entry name" value="Translational machinery components"/>
    <property type="match status" value="1"/>
</dbReference>
<protein>
    <recommendedName>
        <fullName evidence="1">Large ribosomal subunit protein uL18</fullName>
    </recommendedName>
    <alternativeName>
        <fullName evidence="2">50S ribosomal protein L18</fullName>
    </alternativeName>
</protein>